<accession>B4HQJ2</accession>
<keyword id="KW-0067">ATP-binding</keyword>
<keyword id="KW-0507">mRNA processing</keyword>
<keyword id="KW-0547">Nucleotide-binding</keyword>
<keyword id="KW-0539">Nucleus</keyword>
<keyword id="KW-1185">Reference proteome</keyword>
<comment type="function">
    <text evidence="1">Required for endonucleolytic cleavage during polyadenylation-dependent pre-mRNA 3'-end formation.</text>
</comment>
<comment type="subcellular location">
    <subcellularLocation>
        <location evidence="1">Nucleus</location>
    </subcellularLocation>
</comment>
<comment type="similarity">
    <text evidence="1">Belongs to the Clp1 family. Clp1 subfamily.</text>
</comment>
<evidence type="ECO:0000255" key="1">
    <source>
        <dbReference type="HAMAP-Rule" id="MF_03035"/>
    </source>
</evidence>
<organism>
    <name type="scientific">Drosophila sechellia</name>
    <name type="common">Fruit fly</name>
    <dbReference type="NCBI Taxonomy" id="7238"/>
    <lineage>
        <taxon>Eukaryota</taxon>
        <taxon>Metazoa</taxon>
        <taxon>Ecdysozoa</taxon>
        <taxon>Arthropoda</taxon>
        <taxon>Hexapoda</taxon>
        <taxon>Insecta</taxon>
        <taxon>Pterygota</taxon>
        <taxon>Neoptera</taxon>
        <taxon>Endopterygota</taxon>
        <taxon>Diptera</taxon>
        <taxon>Brachycera</taxon>
        <taxon>Muscomorpha</taxon>
        <taxon>Ephydroidea</taxon>
        <taxon>Drosophilidae</taxon>
        <taxon>Drosophila</taxon>
        <taxon>Sophophora</taxon>
    </lineage>
</organism>
<protein>
    <recommendedName>
        <fullName evidence="1">Protein CLP1 homolog</fullName>
    </recommendedName>
</protein>
<gene>
    <name type="primary">cbc</name>
    <name type="ORF">GM20275</name>
</gene>
<reference key="1">
    <citation type="journal article" date="2007" name="Nature">
        <title>Evolution of genes and genomes on the Drosophila phylogeny.</title>
        <authorList>
            <consortium name="Drosophila 12 genomes consortium"/>
        </authorList>
    </citation>
    <scope>NUCLEOTIDE SEQUENCE [LARGE SCALE GENOMIC DNA]</scope>
    <source>
        <strain>Rob3c / Tucson 14021-0248.25</strain>
    </source>
</reference>
<name>CLP1_DROSE</name>
<proteinExistence type="inferred from homology"/>
<feature type="chain" id="PRO_0000375184" description="Protein CLP1 homolog">
    <location>
        <begin position="1"/>
        <end position="423"/>
    </location>
</feature>
<feature type="binding site" evidence="1">
    <location>
        <position position="16"/>
    </location>
    <ligand>
        <name>ATP</name>
        <dbReference type="ChEBI" id="CHEBI:30616"/>
    </ligand>
</feature>
<feature type="binding site" evidence="1">
    <location>
        <position position="57"/>
    </location>
    <ligand>
        <name>ATP</name>
        <dbReference type="ChEBI" id="CHEBI:30616"/>
    </ligand>
</feature>
<feature type="binding site" evidence="1">
    <location>
        <begin position="119"/>
        <end position="124"/>
    </location>
    <ligand>
        <name>ATP</name>
        <dbReference type="ChEBI" id="CHEBI:30616"/>
    </ligand>
</feature>
<sequence length="423" mass="46842">MSEDHGKDYTLESDSELRFEIEQKDAKVLVSLVSGFAELFGTELVKKKQYEFGVGAKVAIFTYQGCVLHVSGKMDVCYISKETPMVQYVNCHAALEQFRMEAEEKDRYGPVAMVVGPMDVGKSTLCRILLNYAVRVGRRPLYADLDVGQGSIAISGSVATILIERPANVEEGFAKTAPLVYHFGHKSPSGNSVLYNAVVSKMAEVTLQSLNSNKRTKSSGIIINTCGWVKGSGYAHLLHAAKAYGACAIFVLDQERLYNELLRDVPKEVHVVLLPKSGGVVERSKELRHEARDQRIKEYFYGNARAPFYPFSFEVKFQDLRLYKIGAPPLPDSCMPIGMKAEDNKTKVVAVTPTPALIHHVLALSFAESVEDDVIGTNVAGFCCVTEVDMERQAVMLLSPQPRPLPPNALLLWSELQFMDNHT</sequence>
<dbReference type="EMBL" id="CH480816">
    <property type="protein sequence ID" value="EDW47727.1"/>
    <property type="molecule type" value="Genomic_DNA"/>
</dbReference>
<dbReference type="SMR" id="B4HQJ2"/>
<dbReference type="STRING" id="7238.B4HQJ2"/>
<dbReference type="EnsemblMetazoa" id="FBtr0203260">
    <property type="protein sequence ID" value="FBpp0201752"/>
    <property type="gene ID" value="FBgn0175158"/>
</dbReference>
<dbReference type="EnsemblMetazoa" id="XM_002033678.2">
    <property type="protein sequence ID" value="XP_002033714.1"/>
    <property type="gene ID" value="LOC6609009"/>
</dbReference>
<dbReference type="GeneID" id="6609009"/>
<dbReference type="KEGG" id="dse:6609009"/>
<dbReference type="CTD" id="36494"/>
<dbReference type="HOGENOM" id="CLU_018195_1_0_1"/>
<dbReference type="OMA" id="VQYVNCH"/>
<dbReference type="OrthoDB" id="6265at7215"/>
<dbReference type="PhylomeDB" id="B4HQJ2"/>
<dbReference type="Proteomes" id="UP000001292">
    <property type="component" value="Unassembled WGS sequence"/>
</dbReference>
<dbReference type="GO" id="GO:0005849">
    <property type="term" value="C:mRNA cleavage factor complex"/>
    <property type="evidence" value="ECO:0007669"/>
    <property type="project" value="InterPro"/>
</dbReference>
<dbReference type="GO" id="GO:0000214">
    <property type="term" value="C:tRNA-intron endonuclease complex"/>
    <property type="evidence" value="ECO:0000250"/>
    <property type="project" value="UniProtKB"/>
</dbReference>
<dbReference type="GO" id="GO:0005524">
    <property type="term" value="F:ATP binding"/>
    <property type="evidence" value="ECO:0007669"/>
    <property type="project" value="UniProtKB-UniRule"/>
</dbReference>
<dbReference type="GO" id="GO:0051731">
    <property type="term" value="F:polynucleotide 5'-hydroxyl-kinase activity"/>
    <property type="evidence" value="ECO:0007669"/>
    <property type="project" value="InterPro"/>
</dbReference>
<dbReference type="GO" id="GO:0031124">
    <property type="term" value="P:mRNA 3'-end processing"/>
    <property type="evidence" value="ECO:0007669"/>
    <property type="project" value="UniProtKB-UniRule"/>
</dbReference>
<dbReference type="GO" id="GO:0006388">
    <property type="term" value="P:tRNA splicing, via endonucleolytic cleavage and ligation"/>
    <property type="evidence" value="ECO:0000250"/>
    <property type="project" value="UniProtKB"/>
</dbReference>
<dbReference type="CDD" id="cd01983">
    <property type="entry name" value="SIMIBI"/>
    <property type="match status" value="1"/>
</dbReference>
<dbReference type="FunFam" id="2.40.30.330:FF:000001">
    <property type="entry name" value="Protein CLP1 homolog"/>
    <property type="match status" value="1"/>
</dbReference>
<dbReference type="FunFam" id="3.40.50.300:FF:000454">
    <property type="entry name" value="Protein CLP1 homolog"/>
    <property type="match status" value="1"/>
</dbReference>
<dbReference type="FunFam" id="2.60.120.1030:FF:000001">
    <property type="entry name" value="Protein CLP1 homolog 5"/>
    <property type="match status" value="1"/>
</dbReference>
<dbReference type="Gene3D" id="2.60.120.1030">
    <property type="entry name" value="Clp1, DNA binding domain"/>
    <property type="match status" value="1"/>
</dbReference>
<dbReference type="Gene3D" id="3.40.50.300">
    <property type="entry name" value="P-loop containing nucleotide triphosphate hydrolases"/>
    <property type="match status" value="1"/>
</dbReference>
<dbReference type="Gene3D" id="2.40.30.330">
    <property type="entry name" value="Pre-mRNA cleavage complex subunit Clp1, C-terminal domain"/>
    <property type="match status" value="1"/>
</dbReference>
<dbReference type="HAMAP" id="MF_03035">
    <property type="entry name" value="Clp1"/>
    <property type="match status" value="1"/>
</dbReference>
<dbReference type="InterPro" id="IPR028606">
    <property type="entry name" value="Clp1"/>
</dbReference>
<dbReference type="InterPro" id="IPR045116">
    <property type="entry name" value="Clp1/Grc3"/>
</dbReference>
<dbReference type="InterPro" id="IPR010655">
    <property type="entry name" value="Clp1_C"/>
</dbReference>
<dbReference type="InterPro" id="IPR038238">
    <property type="entry name" value="Clp1_C_sf"/>
</dbReference>
<dbReference type="InterPro" id="IPR032324">
    <property type="entry name" value="Clp1_N"/>
</dbReference>
<dbReference type="InterPro" id="IPR038239">
    <property type="entry name" value="Clp1_N_sf"/>
</dbReference>
<dbReference type="InterPro" id="IPR032319">
    <property type="entry name" value="CLP1_P"/>
</dbReference>
<dbReference type="InterPro" id="IPR027417">
    <property type="entry name" value="P-loop_NTPase"/>
</dbReference>
<dbReference type="PANTHER" id="PTHR12755">
    <property type="entry name" value="CLEAVAGE/POLYADENYLATION FACTOR IA SUBUNIT CLP1P"/>
    <property type="match status" value="1"/>
</dbReference>
<dbReference type="PANTHER" id="PTHR12755:SF6">
    <property type="entry name" value="POLYRIBONUCLEOTIDE 5'-HYDROXYL-KINASE CLP1"/>
    <property type="match status" value="1"/>
</dbReference>
<dbReference type="Pfam" id="PF06807">
    <property type="entry name" value="Clp1"/>
    <property type="match status" value="1"/>
</dbReference>
<dbReference type="Pfam" id="PF16573">
    <property type="entry name" value="CLP1_N"/>
    <property type="match status" value="1"/>
</dbReference>
<dbReference type="Pfam" id="PF16575">
    <property type="entry name" value="CLP1_P"/>
    <property type="match status" value="1"/>
</dbReference>
<dbReference type="SUPFAM" id="SSF52540">
    <property type="entry name" value="P-loop containing nucleoside triphosphate hydrolases"/>
    <property type="match status" value="1"/>
</dbReference>